<keyword id="KW-0067">ATP-binding</keyword>
<keyword id="KW-0963">Cytoplasm</keyword>
<keyword id="KW-0520">NAD</keyword>
<keyword id="KW-0547">Nucleotide-binding</keyword>
<keyword id="KW-0548">Nucleotidyltransferase</keyword>
<keyword id="KW-0662">Pyridine nucleotide biosynthesis</keyword>
<keyword id="KW-0808">Transferase</keyword>
<organism>
    <name type="scientific">Methanosarcina barkeri (strain Fusaro / DSM 804)</name>
    <dbReference type="NCBI Taxonomy" id="269797"/>
    <lineage>
        <taxon>Archaea</taxon>
        <taxon>Methanobacteriati</taxon>
        <taxon>Methanobacteriota</taxon>
        <taxon>Stenosarchaea group</taxon>
        <taxon>Methanomicrobia</taxon>
        <taxon>Methanosarcinales</taxon>
        <taxon>Methanosarcinaceae</taxon>
        <taxon>Methanosarcina</taxon>
    </lineage>
</organism>
<protein>
    <recommendedName>
        <fullName evidence="1">Nicotinamide-nucleotide adenylyltransferase</fullName>
        <ecNumber evidence="1">2.7.7.1</ecNumber>
    </recommendedName>
    <alternativeName>
        <fullName evidence="1">NAD(+) diphosphorylase</fullName>
    </alternativeName>
    <alternativeName>
        <fullName evidence="1">NAD(+) pyrophosphorylase</fullName>
    </alternativeName>
    <alternativeName>
        <fullName evidence="1">NMN adenylyltransferase</fullName>
    </alternativeName>
</protein>
<gene>
    <name type="ordered locus">Mbar_A0256</name>
</gene>
<comment type="catalytic activity">
    <reaction evidence="1">
        <text>beta-nicotinamide D-ribonucleotide + ATP + H(+) = diphosphate + NAD(+)</text>
        <dbReference type="Rhea" id="RHEA:21360"/>
        <dbReference type="ChEBI" id="CHEBI:14649"/>
        <dbReference type="ChEBI" id="CHEBI:15378"/>
        <dbReference type="ChEBI" id="CHEBI:30616"/>
        <dbReference type="ChEBI" id="CHEBI:33019"/>
        <dbReference type="ChEBI" id="CHEBI:57540"/>
        <dbReference type="EC" id="2.7.7.1"/>
    </reaction>
</comment>
<comment type="pathway">
    <text evidence="1">Cofactor biosynthesis; NAD(+) biosynthesis; NAD(+) from nicotinamide D-ribonucleotide: step 1/1.</text>
</comment>
<comment type="subcellular location">
    <subcellularLocation>
        <location evidence="1">Cytoplasm</location>
    </subcellularLocation>
</comment>
<comment type="similarity">
    <text evidence="1">Belongs to the archaeal NMN adenylyltransferase family.</text>
</comment>
<reference key="1">
    <citation type="journal article" date="2006" name="J. Bacteriol.">
        <title>The Methanosarcina barkeri genome: comparative analysis with Methanosarcina acetivorans and Methanosarcina mazei reveals extensive rearrangement within methanosarcinal genomes.</title>
        <authorList>
            <person name="Maeder D.L."/>
            <person name="Anderson I."/>
            <person name="Brettin T.S."/>
            <person name="Bruce D.C."/>
            <person name="Gilna P."/>
            <person name="Han C.S."/>
            <person name="Lapidus A."/>
            <person name="Metcalf W.W."/>
            <person name="Saunders E."/>
            <person name="Tapia R."/>
            <person name="Sowers K.R."/>
        </authorList>
    </citation>
    <scope>NUCLEOTIDE SEQUENCE [LARGE SCALE GENOMIC DNA]</scope>
    <source>
        <strain>Fusaro / DSM 804</strain>
    </source>
</reference>
<feature type="chain" id="PRO_1000005735" description="Nicotinamide-nucleotide adenylyltransferase">
    <location>
        <begin position="1"/>
        <end position="173"/>
    </location>
</feature>
<dbReference type="EC" id="2.7.7.1" evidence="1"/>
<dbReference type="EMBL" id="CP000099">
    <property type="protein sequence ID" value="AAZ69240.1"/>
    <property type="molecule type" value="Genomic_DNA"/>
</dbReference>
<dbReference type="SMR" id="Q46FV2"/>
<dbReference type="STRING" id="269797.Mbar_A0256"/>
<dbReference type="PaxDb" id="269797-Mbar_A0256"/>
<dbReference type="KEGG" id="mba:Mbar_A0256"/>
<dbReference type="eggNOG" id="arCOG00972">
    <property type="taxonomic scope" value="Archaea"/>
</dbReference>
<dbReference type="HOGENOM" id="CLU_108783_0_0_2"/>
<dbReference type="OrthoDB" id="264480at2157"/>
<dbReference type="UniPathway" id="UPA00253">
    <property type="reaction ID" value="UER00600"/>
</dbReference>
<dbReference type="GO" id="GO:0005737">
    <property type="term" value="C:cytoplasm"/>
    <property type="evidence" value="ECO:0007669"/>
    <property type="project" value="UniProtKB-SubCell"/>
</dbReference>
<dbReference type="GO" id="GO:0005524">
    <property type="term" value="F:ATP binding"/>
    <property type="evidence" value="ECO:0007669"/>
    <property type="project" value="UniProtKB-KW"/>
</dbReference>
<dbReference type="GO" id="GO:0000309">
    <property type="term" value="F:nicotinamide-nucleotide adenylyltransferase activity"/>
    <property type="evidence" value="ECO:0007669"/>
    <property type="project" value="UniProtKB-UniRule"/>
</dbReference>
<dbReference type="GO" id="GO:0009435">
    <property type="term" value="P:NAD biosynthetic process"/>
    <property type="evidence" value="ECO:0007669"/>
    <property type="project" value="UniProtKB-UniRule"/>
</dbReference>
<dbReference type="CDD" id="cd02166">
    <property type="entry name" value="NMNAT_Archaea"/>
    <property type="match status" value="1"/>
</dbReference>
<dbReference type="Gene3D" id="3.40.50.620">
    <property type="entry name" value="HUPs"/>
    <property type="match status" value="1"/>
</dbReference>
<dbReference type="HAMAP" id="MF_00243">
    <property type="entry name" value="NMN_adenylyltr"/>
    <property type="match status" value="1"/>
</dbReference>
<dbReference type="InterPro" id="IPR004821">
    <property type="entry name" value="Cyt_trans-like"/>
</dbReference>
<dbReference type="InterPro" id="IPR006418">
    <property type="entry name" value="NMN_Atrans_arc"/>
</dbReference>
<dbReference type="InterPro" id="IPR014729">
    <property type="entry name" value="Rossmann-like_a/b/a_fold"/>
</dbReference>
<dbReference type="NCBIfam" id="TIGR01527">
    <property type="entry name" value="arch_NMN_Atrans"/>
    <property type="match status" value="1"/>
</dbReference>
<dbReference type="NCBIfam" id="TIGR00125">
    <property type="entry name" value="cyt_tran_rel"/>
    <property type="match status" value="1"/>
</dbReference>
<dbReference type="NCBIfam" id="NF002243">
    <property type="entry name" value="PRK01153.1"/>
    <property type="match status" value="1"/>
</dbReference>
<dbReference type="PANTHER" id="PTHR21342:SF0">
    <property type="entry name" value="BIFUNCTIONAL NMN ADENYLYLTRANSFERASE_NUDIX HYDROLASE"/>
    <property type="match status" value="1"/>
</dbReference>
<dbReference type="PANTHER" id="PTHR21342">
    <property type="entry name" value="PHOSPHOPANTETHEINE ADENYLYLTRANSFERASE"/>
    <property type="match status" value="1"/>
</dbReference>
<dbReference type="Pfam" id="PF01467">
    <property type="entry name" value="CTP_transf_like"/>
    <property type="match status" value="1"/>
</dbReference>
<dbReference type="SUPFAM" id="SSF52374">
    <property type="entry name" value="Nucleotidylyl transferase"/>
    <property type="match status" value="1"/>
</dbReference>
<evidence type="ECO:0000255" key="1">
    <source>
        <dbReference type="HAMAP-Rule" id="MF_00243"/>
    </source>
</evidence>
<accession>Q46FV2</accession>
<name>NADM_METBF</name>
<sequence length="173" mass="19899">MTRAFYIGRFQPYHFGHHTIIKQIAEEVDELVVGIGSAQKSHESTDPFTAGERVLMVYNALENLPIRHYVLPIEDIKYNSIWVHHVASRTPHFEVVYSNNPLVIQLFREAGVCVKQSPLYIRERYSGTEIRRRMIAGEKWEHLVPKSVVEVIKEIDGVTRLRNVSASDNNSSL</sequence>
<proteinExistence type="inferred from homology"/>